<accession>Q57095</accession>
<evidence type="ECO:0000255" key="1">
    <source>
        <dbReference type="HAMAP-Rule" id="MF_00428"/>
    </source>
</evidence>
<evidence type="ECO:0000269" key="2">
    <source>
    </source>
</evidence>
<evidence type="ECO:0000269" key="3">
    <source>
    </source>
</evidence>
<evidence type="ECO:0000303" key="4">
    <source>
    </source>
</evidence>
<evidence type="ECO:0000303" key="5">
    <source>
    </source>
</evidence>
<evidence type="ECO:0000303" key="6">
    <source>
    </source>
</evidence>
<evidence type="ECO:0000305" key="7"/>
<evidence type="ECO:0000305" key="8">
    <source>
    </source>
</evidence>
<evidence type="ECO:0000305" key="9">
    <source>
    </source>
</evidence>
<feature type="initiator methionine" description="Removed" evidence="3">
    <location>
        <position position="1"/>
    </location>
</feature>
<feature type="chain" id="PRO_0000214239" description="Na(+)-translocating NADH-quinone reductase subunit D">
    <location>
        <begin position="2"/>
        <end position="210"/>
    </location>
</feature>
<feature type="transmembrane region" description="Helical" evidence="1">
    <location>
        <begin position="42"/>
        <end position="62"/>
    </location>
</feature>
<feature type="transmembrane region" description="Helical" evidence="1">
    <location>
        <begin position="72"/>
        <end position="92"/>
    </location>
</feature>
<feature type="transmembrane region" description="Helical" evidence="1">
    <location>
        <begin position="103"/>
        <end position="123"/>
    </location>
</feature>
<feature type="transmembrane region" description="Helical" evidence="1">
    <location>
        <begin position="131"/>
        <end position="151"/>
    </location>
</feature>
<feature type="transmembrane region" description="Helical" evidence="1">
    <location>
        <begin position="178"/>
        <end position="198"/>
    </location>
</feature>
<organism>
    <name type="scientific">Vibrio alginolyticus</name>
    <dbReference type="NCBI Taxonomy" id="663"/>
    <lineage>
        <taxon>Bacteria</taxon>
        <taxon>Pseudomonadati</taxon>
        <taxon>Pseudomonadota</taxon>
        <taxon>Gammaproteobacteria</taxon>
        <taxon>Vibrionales</taxon>
        <taxon>Vibrionaceae</taxon>
        <taxon>Vibrio</taxon>
    </lineage>
</organism>
<sequence>MSSAQNVKKSILAPVLDNNPIALQVLGVCSALAVTTKLETAFVMTLAVTFVTALSNFSVSLIRNHIPNSVRIIVQMAIIASLVIVVDQVLKAYLYDISKQLSVFVGLIITNCIVMGRAEAFAMKSAPVPSLIDGIGNGLGYGFVLITVGFFRELFGSGKLFGLEVLPLVSNGGWYQPNGLMLLAPSAFFLIGFLIWVIRILKPEQVEAKE</sequence>
<gene>
    <name evidence="1 5" type="primary">nqrD</name>
    <name evidence="4" type="synonym">nqr4</name>
</gene>
<dbReference type="EC" id="7.2.1.1" evidence="1 3"/>
<dbReference type="EMBL" id="Z37111">
    <property type="protein sequence ID" value="CAA85479.1"/>
    <property type="molecule type" value="Genomic_DNA"/>
</dbReference>
<dbReference type="EMBL" id="AB008030">
    <property type="protein sequence ID" value="BAA22913.1"/>
    <property type="molecule type" value="Genomic_DNA"/>
</dbReference>
<dbReference type="PIR" id="S65529">
    <property type="entry name" value="S65529"/>
</dbReference>
<dbReference type="RefSeq" id="WP_005380269.1">
    <property type="nucleotide sequence ID" value="NZ_WAHT01000008.1"/>
</dbReference>
<dbReference type="SMR" id="Q57095"/>
<dbReference type="STRING" id="663.BAU10_10825"/>
<dbReference type="TCDB" id="3.D.5.1.1">
    <property type="family name" value="the na(+)-translocating nadh:quinone dehydrogenase (na-ndh or nqr) family"/>
</dbReference>
<dbReference type="eggNOG" id="COG1347">
    <property type="taxonomic scope" value="Bacteria"/>
</dbReference>
<dbReference type="OrthoDB" id="9782945at2"/>
<dbReference type="GO" id="GO:0005886">
    <property type="term" value="C:plasma membrane"/>
    <property type="evidence" value="ECO:0007669"/>
    <property type="project" value="UniProtKB-SubCell"/>
</dbReference>
<dbReference type="GO" id="GO:0016655">
    <property type="term" value="F:oxidoreductase activity, acting on NAD(P)H, quinone or similar compound as acceptor"/>
    <property type="evidence" value="ECO:0000314"/>
    <property type="project" value="UniProtKB"/>
</dbReference>
<dbReference type="GO" id="GO:0006814">
    <property type="term" value="P:sodium ion transport"/>
    <property type="evidence" value="ECO:0007669"/>
    <property type="project" value="UniProtKB-UniRule"/>
</dbReference>
<dbReference type="HAMAP" id="MF_00428">
    <property type="entry name" value="NqrD"/>
    <property type="match status" value="1"/>
</dbReference>
<dbReference type="InterPro" id="IPR011292">
    <property type="entry name" value="NqrD"/>
</dbReference>
<dbReference type="InterPro" id="IPR003667">
    <property type="entry name" value="NqrDE/RnfAE"/>
</dbReference>
<dbReference type="NCBIfam" id="TIGR01939">
    <property type="entry name" value="nqrD"/>
    <property type="match status" value="1"/>
</dbReference>
<dbReference type="NCBIfam" id="NF006777">
    <property type="entry name" value="PRK09292.1"/>
    <property type="match status" value="1"/>
</dbReference>
<dbReference type="NCBIfam" id="NF009070">
    <property type="entry name" value="PRK12405.1"/>
    <property type="match status" value="1"/>
</dbReference>
<dbReference type="PANTHER" id="PTHR30586">
    <property type="entry name" value="ELECTRON TRANSPORT COMPLEX PROTEIN RNFE"/>
    <property type="match status" value="1"/>
</dbReference>
<dbReference type="PANTHER" id="PTHR30586:SF1">
    <property type="entry name" value="NA(+)-TRANSLOCATING NADH-QUINONE REDUCTASE SUBUNIT D"/>
    <property type="match status" value="1"/>
</dbReference>
<dbReference type="Pfam" id="PF02508">
    <property type="entry name" value="Rnf-Nqr"/>
    <property type="match status" value="1"/>
</dbReference>
<dbReference type="PIRSF" id="PIRSF006102">
    <property type="entry name" value="NQR_DE"/>
    <property type="match status" value="1"/>
</dbReference>
<reference key="1">
    <citation type="journal article" date="1994" name="FEBS Lett.">
        <title>Cloning and sequencing of four structural genes for the Na(+)-translocating NADH-ubiquinone oxidoreductase of Vibrio alginolyticus.</title>
        <authorList>
            <person name="Beattie P."/>
            <person name="Tan K."/>
            <person name="Bourne R.M."/>
            <person name="Leach D.R.F."/>
            <person name="Rich P.R."/>
            <person name="Ward F.B."/>
        </authorList>
    </citation>
    <scope>NUCLEOTIDE SEQUENCE [GENOMIC DNA]</scope>
    <source>
        <strain>NCIMB 11038 / LMG 3418</strain>
    </source>
</reference>
<reference key="2">
    <citation type="journal article" date="1995" name="FEBS Lett.">
        <title>Sequencing and the alignment of structural genes in the nqr operon encoding the Na(+)-translocating NADH-quinone reductase from Vibrio alginolyticus.</title>
        <authorList>
            <person name="Hayashi M."/>
            <person name="Hirai K."/>
            <person name="Unemoto T."/>
        </authorList>
    </citation>
    <scope>NUCLEOTIDE SEQUENCE [GENOMIC DNA]</scope>
</reference>
<reference key="3">
    <citation type="journal article" date="1998" name="FEBS Lett.">
        <title>Identification of six subunits constituting Na+-translocating NADH-quinone reductase from the marine Vibrio alginolyticus.</title>
        <authorList>
            <person name="Nakayama Y."/>
            <person name="Hayashi M."/>
            <person name="Unemoto T."/>
        </authorList>
    </citation>
    <scope>PROTEIN SEQUENCE OF 2-11</scope>
    <scope>CATALYTIC ACTIVITY</scope>
    <scope>SUBUNIT</scope>
</reference>
<reference key="4">
    <citation type="journal article" date="1999" name="Biol. Pharm. Bull.">
        <title>Inhibitor studies of a new antibiotic, korormicin, 2-n-heptyl-4-hydroxyquinoline N-oxide and Ag+ toward the Na+-translocating NADH-quinone reductase from the marine Vibrio alginolyticus.</title>
        <authorList>
            <person name="Nakayama Y."/>
            <person name="Hayashi M."/>
            <person name="Yoshikawa K."/>
            <person name="Mochida K."/>
            <person name="Unemoto T."/>
        </authorList>
    </citation>
    <scope>INHIBITION OF ENZYMATIC ACTIVITY</scope>
</reference>
<reference key="5">
    <citation type="journal article" date="2001" name="Biochim. Biophys. Acta">
        <title>Recent progress in the Na(+)-translocating NADH-quinone reductase from the marine Vibrio alginolyticus.</title>
        <authorList>
            <person name="Hayashi M."/>
            <person name="Nakayama Y."/>
            <person name="Unemoto T."/>
        </authorList>
    </citation>
    <scope>REVIEW</scope>
</reference>
<reference key="6">
    <citation type="journal article" date="2001" name="Biochim. Biophys. Acta">
        <title>Na(+) translocation by bacterial NADH:quinone oxidoreductases: an extension to the complex-I family of primary redox pumps.</title>
        <authorList>
            <person name="Steuber J."/>
        </authorList>
    </citation>
    <scope>REVIEW</scope>
</reference>
<protein>
    <recommendedName>
        <fullName evidence="1 6">Na(+)-translocating NADH-quinone reductase subunit D</fullName>
        <shortName evidence="1">Na(+)-NQR subunit D</shortName>
        <shortName evidence="1">Na(+)-translocating NQR subunit D</shortName>
        <ecNumber evidence="1 3">7.2.1.1</ecNumber>
    </recommendedName>
    <alternativeName>
        <fullName evidence="1">NQR complex subunit D</fullName>
    </alternativeName>
    <alternativeName>
        <fullName evidence="1">NQR-1 subunit D</fullName>
    </alternativeName>
</protein>
<proteinExistence type="evidence at protein level"/>
<comment type="function">
    <text evidence="1 8 9">NQR complex catalyzes the reduction of ubiquinone-1 to ubiquinol by two successive reactions, coupled with the transport of Na(+) ions from the cytoplasm to the periplasm. NqrA to NqrE are probably involved in the second step, the conversion of ubisemiquinone to ubiquinol.</text>
</comment>
<comment type="catalytic activity">
    <reaction evidence="1 3">
        <text>a ubiquinone + n Na(+)(in) + NADH + H(+) = a ubiquinol + n Na(+)(out) + NAD(+)</text>
        <dbReference type="Rhea" id="RHEA:47748"/>
        <dbReference type="Rhea" id="RHEA-COMP:9565"/>
        <dbReference type="Rhea" id="RHEA-COMP:9566"/>
        <dbReference type="ChEBI" id="CHEBI:15378"/>
        <dbReference type="ChEBI" id="CHEBI:16389"/>
        <dbReference type="ChEBI" id="CHEBI:17976"/>
        <dbReference type="ChEBI" id="CHEBI:29101"/>
        <dbReference type="ChEBI" id="CHEBI:57540"/>
        <dbReference type="ChEBI" id="CHEBI:57945"/>
        <dbReference type="EC" id="7.2.1.1"/>
    </reaction>
</comment>
<comment type="activity regulation">
    <text evidence="2">This reaction is tightly coupled to the Na(+) pumping activity and specifically requires Na(+) for activity. Inhibited by korormicin and 2-N-heptyl-4-hydroxyquinoline N-oxide (HQNO).</text>
</comment>
<comment type="subunit">
    <text evidence="1 3">Composed of six subunits; NqrA, NqrB, NqrC, NqrD, NqrE and NqrF.</text>
</comment>
<comment type="subcellular location">
    <subcellularLocation>
        <location evidence="1 7">Cell inner membrane</location>
        <topology evidence="1">Multi-pass membrane protein</topology>
    </subcellularLocation>
</comment>
<comment type="similarity">
    <text evidence="1 7">Belongs to the NqrDE/RnfAE family.</text>
</comment>
<name>NQRD_VIBAL</name>
<keyword id="KW-0997">Cell inner membrane</keyword>
<keyword id="KW-1003">Cell membrane</keyword>
<keyword id="KW-0903">Direct protein sequencing</keyword>
<keyword id="KW-0406">Ion transport</keyword>
<keyword id="KW-0472">Membrane</keyword>
<keyword id="KW-0520">NAD</keyword>
<keyword id="KW-0915">Sodium</keyword>
<keyword id="KW-0739">Sodium transport</keyword>
<keyword id="KW-1278">Translocase</keyword>
<keyword id="KW-0812">Transmembrane</keyword>
<keyword id="KW-1133">Transmembrane helix</keyword>
<keyword id="KW-0813">Transport</keyword>
<keyword id="KW-0830">Ubiquinone</keyword>